<accession>Q80UV9</accession>
<accession>A2AM32</accession>
<accession>A2AM33</accession>
<accession>O35361</accession>
<accession>Q3UPF3</accession>
<accession>Q3V223</accession>
<accession>Q505F9</accession>
<accession>Q8BQH8</accession>
<accession>Q8BQQ7</accession>
<accession>Q8BR59</accession>
<accession>Q8C7N8</accession>
<accession>Q9WTW9</accession>
<accession>Q9WTX0</accession>
<accession>Q9WTX1</accession>
<gene>
    <name evidence="10" type="primary">Taf1</name>
    <name type="synonym">Ccg1</name>
</gene>
<protein>
    <recommendedName>
        <fullName evidence="9">Transcription initiation factor TFIID subunit 1</fullName>
        <ecNumber evidence="2">2.3.1.48</ecNumber>
        <ecNumber>2.7.11.1</ecNumber>
    </recommendedName>
    <alternativeName>
        <fullName>Cell cycle gene 1 protein</fullName>
    </alternativeName>
    <alternativeName>
        <fullName>TBP-associated factor 250 kDa</fullName>
        <shortName>p250</shortName>
    </alternativeName>
    <alternativeName>
        <fullName>Transcription initiation factor TFIID 250 kDa subunit</fullName>
        <shortName>TAF(II)250</shortName>
        <shortName>TAFII-250</shortName>
        <shortName>TAFII250</shortName>
    </alternativeName>
</protein>
<feature type="chain" id="PRO_0000278524" description="Transcription initiation factor TFIID subunit 1">
    <location>
        <begin position="1"/>
        <end position="1891"/>
    </location>
</feature>
<feature type="domain" description="Protein kinase 1">
    <location>
        <begin position="1"/>
        <end position="435"/>
    </location>
</feature>
<feature type="domain" description="Bromo 1" evidence="4">
    <location>
        <begin position="1397"/>
        <end position="1505"/>
    </location>
</feature>
<feature type="domain" description="Protein kinase 2">
    <location>
        <begin position="1446"/>
        <end position="1891"/>
    </location>
</feature>
<feature type="domain" description="Bromo 2" evidence="4">
    <location>
        <begin position="1519"/>
        <end position="1628"/>
    </location>
</feature>
<feature type="DNA-binding region" description="HMG box" evidence="1">
    <location>
        <begin position="1216"/>
        <end position="1294"/>
    </location>
</feature>
<feature type="region of interest" description="Disordered" evidence="5">
    <location>
        <begin position="1"/>
        <end position="34"/>
    </location>
</feature>
<feature type="region of interest" description="Disordered" evidence="5">
    <location>
        <begin position="154"/>
        <end position="180"/>
    </location>
</feature>
<feature type="region of interest" description="Disordered" evidence="5">
    <location>
        <begin position="197"/>
        <end position="224"/>
    </location>
</feature>
<feature type="region of interest" description="Disordered" evidence="5">
    <location>
        <begin position="535"/>
        <end position="556"/>
    </location>
</feature>
<feature type="region of interest" description="Histone acetyltransferase (HAT)" evidence="1">
    <location>
        <begin position="538"/>
        <end position="997"/>
    </location>
</feature>
<feature type="region of interest" description="Disordered" evidence="5">
    <location>
        <begin position="990"/>
        <end position="1009"/>
    </location>
</feature>
<feature type="region of interest" description="Disordered" evidence="5">
    <location>
        <begin position="1128"/>
        <end position="1148"/>
    </location>
</feature>
<feature type="region of interest" description="Disordered" evidence="5">
    <location>
        <begin position="1254"/>
        <end position="1278"/>
    </location>
</feature>
<feature type="region of interest" description="Interaction with ASF1A and ASF1B" evidence="1">
    <location>
        <begin position="1363"/>
        <end position="1650"/>
    </location>
</feature>
<feature type="region of interest" description="Disordered" evidence="5">
    <location>
        <begin position="1651"/>
        <end position="1676"/>
    </location>
</feature>
<feature type="region of interest" description="Disordered" evidence="5">
    <location>
        <begin position="1690"/>
        <end position="1891"/>
    </location>
</feature>
<feature type="short sequence motif" description="Nuclear localization signal" evidence="3">
    <location>
        <begin position="1372"/>
        <end position="1379"/>
    </location>
</feature>
<feature type="compositionally biased region" description="Pro residues" evidence="5">
    <location>
        <begin position="156"/>
        <end position="165"/>
    </location>
</feature>
<feature type="compositionally biased region" description="Low complexity" evidence="5">
    <location>
        <begin position="197"/>
        <end position="208"/>
    </location>
</feature>
<feature type="compositionally biased region" description="Basic and acidic residues" evidence="5">
    <location>
        <begin position="995"/>
        <end position="1004"/>
    </location>
</feature>
<feature type="compositionally biased region" description="Basic and acidic residues" evidence="5">
    <location>
        <begin position="1139"/>
        <end position="1148"/>
    </location>
</feature>
<feature type="compositionally biased region" description="Basic and acidic residues" evidence="5">
    <location>
        <begin position="1254"/>
        <end position="1270"/>
    </location>
</feature>
<feature type="compositionally biased region" description="Pro residues" evidence="5">
    <location>
        <begin position="1659"/>
        <end position="1668"/>
    </location>
</feature>
<feature type="compositionally biased region" description="Polar residues" evidence="5">
    <location>
        <begin position="1690"/>
        <end position="1708"/>
    </location>
</feature>
<feature type="compositionally biased region" description="Acidic residues" evidence="5">
    <location>
        <begin position="1711"/>
        <end position="1723"/>
    </location>
</feature>
<feature type="compositionally biased region" description="Acidic residues" evidence="5">
    <location>
        <begin position="1741"/>
        <end position="1756"/>
    </location>
</feature>
<feature type="compositionally biased region" description="Low complexity" evidence="5">
    <location>
        <begin position="1764"/>
        <end position="1778"/>
    </location>
</feature>
<feature type="compositionally biased region" description="Polar residues" evidence="5">
    <location>
        <begin position="1830"/>
        <end position="1840"/>
    </location>
</feature>
<feature type="compositionally biased region" description="Acidic residues" evidence="5">
    <location>
        <begin position="1846"/>
        <end position="1855"/>
    </location>
</feature>
<feature type="compositionally biased region" description="Polar residues" evidence="5">
    <location>
        <begin position="1858"/>
        <end position="1867"/>
    </location>
</feature>
<feature type="modified residue" description="Phosphoserine; by autocatalysis" evidence="2">
    <location>
        <position position="328"/>
    </location>
</feature>
<feature type="modified residue" description="N6-acetyllysine" evidence="12">
    <location>
        <position position="565"/>
    </location>
</feature>
<feature type="modified residue" description="Phosphoserine" evidence="11">
    <location>
        <position position="1690"/>
    </location>
</feature>
<feature type="modified residue" description="Phosphoserine" evidence="11">
    <location>
        <position position="1693"/>
    </location>
</feature>
<feature type="modified residue" description="Phosphoserine" evidence="11">
    <location>
        <position position="1799"/>
    </location>
</feature>
<feature type="modified residue" description="Phosphoserine" evidence="11">
    <location>
        <position position="1802"/>
    </location>
</feature>
<feature type="modified residue" description="Phosphoserine" evidence="11">
    <location>
        <position position="1820"/>
    </location>
</feature>
<feature type="modified residue" description="Phosphoserine" evidence="2">
    <location>
        <position position="1847"/>
    </location>
</feature>
<feature type="cross-link" description="Glycyl lysine isopeptide (Lys-Gly) (interchain with G-Cter in SUMO2)" evidence="2">
    <location>
        <position position="570"/>
    </location>
</feature>
<feature type="cross-link" description="Glycyl lysine isopeptide (Lys-Gly) (interchain with G-Cter in SUMO2)" evidence="2">
    <location>
        <position position="583"/>
    </location>
</feature>
<feature type="splice variant" id="VSP_023320" description="In isoform 2." evidence="7">
    <location>
        <begin position="1"/>
        <end position="962"/>
    </location>
</feature>
<feature type="splice variant" id="VSP_062001" description="In isoform 4.">
    <location>
        <begin position="1"/>
        <end position="20"/>
    </location>
</feature>
<feature type="splice variant" id="VSP_023321" description="In isoform 3." evidence="8">
    <location>
        <begin position="178"/>
        <end position="198"/>
    </location>
</feature>
<feature type="sequence conflict" description="In Ref. 4; AAD23348." evidence="9" ref="4">
    <original>D</original>
    <variation>E</variation>
    <location>
        <position position="217"/>
    </location>
</feature>
<feature type="sequence conflict" description="In Ref. 4; AAD23348." evidence="9" ref="4">
    <original>S</original>
    <variation>A</variation>
    <location>
        <position position="221"/>
    </location>
</feature>
<feature type="sequence conflict" description="In Ref. 4; AAD23348." evidence="9" ref="4">
    <original>R</original>
    <variation>H</variation>
    <location>
        <position position="261"/>
    </location>
</feature>
<feature type="sequence conflict" description="In Ref. 4; AAD23348." evidence="9" ref="4">
    <original>E</original>
    <variation>K</variation>
    <location>
        <position position="289"/>
    </location>
</feature>
<feature type="sequence conflict" description="In Ref. 5; AAC62118." evidence="9" ref="5">
    <original>LK</original>
    <variation>EG</variation>
    <location>
        <begin position="867"/>
        <end position="868"/>
    </location>
</feature>
<feature type="sequence conflict" description="In Ref. 4; AAD23349." evidence="9" ref="4">
    <original>T</original>
    <variation>Q</variation>
    <location>
        <position position="876"/>
    </location>
</feature>
<feature type="sequence conflict" description="In Ref. 5; AAC62118." evidence="9" ref="5">
    <original>LYYQT</original>
    <variation>AFVAS</variation>
    <location>
        <begin position="1302"/>
        <end position="1306"/>
    </location>
</feature>
<feature type="sequence conflict" description="In Ref. 4; AAD23350." evidence="9" ref="4">
    <original>R</original>
    <variation>P</variation>
    <location>
        <position position="1358"/>
    </location>
</feature>
<feature type="sequence conflict" description="In Ref. 4; AAD23350." evidence="9" ref="4">
    <original>L</original>
    <variation>F</variation>
    <location>
        <position position="1388"/>
    </location>
</feature>
<feature type="sequence conflict" description="In Ref. 4; AAD23350." evidence="9" ref="4">
    <original>T</original>
    <variation>E</variation>
    <location>
        <position position="1450"/>
    </location>
</feature>
<feature type="sequence conflict" description="In Ref. 4; AAD23350." evidence="9" ref="4">
    <original>HL</original>
    <variation>QM</variation>
    <location>
        <begin position="1469"/>
        <end position="1470"/>
    </location>
</feature>
<feature type="sequence conflict" description="In Ref. 2; AAH94568." evidence="9" ref="2">
    <original>D</original>
    <variation>N</variation>
    <location>
        <position position="1736"/>
    </location>
</feature>
<proteinExistence type="evidence at protein level"/>
<keyword id="KW-0007">Acetylation</keyword>
<keyword id="KW-0012">Acyltransferase</keyword>
<keyword id="KW-0024">Alternative initiation</keyword>
<keyword id="KW-0025">Alternative splicing</keyword>
<keyword id="KW-0067">ATP-binding</keyword>
<keyword id="KW-0103">Bromodomain</keyword>
<keyword id="KW-0131">Cell cycle</keyword>
<keyword id="KW-0238">DNA-binding</keyword>
<keyword id="KW-1017">Isopeptide bond</keyword>
<keyword id="KW-0418">Kinase</keyword>
<keyword id="KW-0547">Nucleotide-binding</keyword>
<keyword id="KW-0539">Nucleus</keyword>
<keyword id="KW-0597">Phosphoprotein</keyword>
<keyword id="KW-1185">Reference proteome</keyword>
<keyword id="KW-0677">Repeat</keyword>
<keyword id="KW-0723">Serine/threonine-protein kinase</keyword>
<keyword id="KW-0804">Transcription</keyword>
<keyword id="KW-0805">Transcription regulation</keyword>
<keyword id="KW-0808">Transferase</keyword>
<keyword id="KW-0832">Ubl conjugation</keyword>
<dbReference type="EC" id="2.3.1.48" evidence="2"/>
<dbReference type="EC" id="2.7.11.1"/>
<dbReference type="EMBL" id="AL806534">
    <property type="status" value="NOT_ANNOTATED_CDS"/>
    <property type="molecule type" value="Genomic_DNA"/>
</dbReference>
<dbReference type="EMBL" id="AL831722">
    <property type="status" value="NOT_ANNOTATED_CDS"/>
    <property type="molecule type" value="Genomic_DNA"/>
</dbReference>
<dbReference type="EMBL" id="BC047418">
    <property type="protein sequence ID" value="AAH47418.1"/>
    <property type="molecule type" value="mRNA"/>
</dbReference>
<dbReference type="EMBL" id="BC094568">
    <property type="protein sequence ID" value="AAH94568.1"/>
    <property type="molecule type" value="mRNA"/>
</dbReference>
<dbReference type="EMBL" id="AK045586">
    <property type="protein sequence ID" value="BAC32425.1"/>
    <property type="molecule type" value="mRNA"/>
</dbReference>
<dbReference type="EMBL" id="AK046668">
    <property type="protein sequence ID" value="BAC32828.1"/>
    <property type="molecule type" value="mRNA"/>
</dbReference>
<dbReference type="EMBL" id="AK049826">
    <property type="protein sequence ID" value="BAC33938.1"/>
    <property type="molecule type" value="mRNA"/>
</dbReference>
<dbReference type="EMBL" id="AK050691">
    <property type="protein sequence ID" value="BAC34383.1"/>
    <property type="status" value="ALT_INIT"/>
    <property type="molecule type" value="mRNA"/>
</dbReference>
<dbReference type="EMBL" id="AK132088">
    <property type="protein sequence ID" value="BAE20976.1"/>
    <property type="molecule type" value="mRNA"/>
</dbReference>
<dbReference type="EMBL" id="AK143571">
    <property type="protein sequence ID" value="BAE25442.1"/>
    <property type="molecule type" value="mRNA"/>
</dbReference>
<dbReference type="EMBL" id="AF081115">
    <property type="protein sequence ID" value="AAD23349.1"/>
    <property type="molecule type" value="mRNA"/>
</dbReference>
<dbReference type="EMBL" id="AF081116">
    <property type="protein sequence ID" value="AAD23348.1"/>
    <property type="molecule type" value="mRNA"/>
</dbReference>
<dbReference type="EMBL" id="AF081117">
    <property type="protein sequence ID" value="AAD23350.1"/>
    <property type="molecule type" value="mRNA"/>
</dbReference>
<dbReference type="EMBL" id="AF022178">
    <property type="protein sequence ID" value="AAC62118.1"/>
    <property type="molecule type" value="mRNA"/>
</dbReference>
<dbReference type="RefSeq" id="NP_001277658.1">
    <property type="nucleotide sequence ID" value="NM_001290729.1"/>
</dbReference>
<dbReference type="RefSeq" id="NP_001392888.2">
    <molecule id="Q80UV9-4"/>
    <property type="nucleotide sequence ID" value="NM_001405959.2"/>
</dbReference>
<dbReference type="RefSeq" id="XP_006528113.1">
    <property type="nucleotide sequence ID" value="XM_006528050.3"/>
</dbReference>
<dbReference type="RefSeq" id="XP_006528115.1">
    <property type="nucleotide sequence ID" value="XM_006528052.3"/>
</dbReference>
<dbReference type="SMR" id="Q80UV9"/>
<dbReference type="BioGRID" id="234808">
    <property type="interactions" value="15"/>
</dbReference>
<dbReference type="ComplexPortal" id="CPX-932">
    <property type="entry name" value="General transcription factor complex TFIID"/>
</dbReference>
<dbReference type="ComplexPortal" id="CPX-959">
    <property type="entry name" value="General transcription factor complex TFIID, Taf4b variant"/>
</dbReference>
<dbReference type="CORUM" id="Q80UV9"/>
<dbReference type="DIP" id="DIP-61093N"/>
<dbReference type="FunCoup" id="Q80UV9">
    <property type="interactions" value="3906"/>
</dbReference>
<dbReference type="IntAct" id="Q80UV9">
    <property type="interactions" value="2"/>
</dbReference>
<dbReference type="MINT" id="Q80UV9"/>
<dbReference type="STRING" id="10090.ENSMUSP00000114765"/>
<dbReference type="GlyGen" id="Q80UV9">
    <property type="glycosylation" value="2 sites, 1 O-linked glycan (2 sites)"/>
</dbReference>
<dbReference type="iPTMnet" id="Q80UV9"/>
<dbReference type="PhosphoSitePlus" id="Q80UV9"/>
<dbReference type="PaxDb" id="10090-ENSMUSP00000098895"/>
<dbReference type="PeptideAtlas" id="Q80UV9"/>
<dbReference type="ProteomicsDB" id="259347">
    <molecule id="Q80UV9-1"/>
</dbReference>
<dbReference type="ProteomicsDB" id="259348">
    <molecule id="Q80UV9-2"/>
</dbReference>
<dbReference type="ProteomicsDB" id="259349">
    <molecule id="Q80UV9-3"/>
</dbReference>
<dbReference type="Pumba" id="Q80UV9"/>
<dbReference type="Antibodypedia" id="25077">
    <property type="antibodies" value="67 antibodies from 21 providers"/>
</dbReference>
<dbReference type="DNASU" id="270627"/>
<dbReference type="Ensembl" id="ENSMUST00000118878.9">
    <molecule id="Q80UV9-3"/>
    <property type="protein sequence ID" value="ENSMUSP00000112772.2"/>
    <property type="gene ID" value="ENSMUSG00000031314.20"/>
</dbReference>
<dbReference type="GeneID" id="270627"/>
<dbReference type="KEGG" id="mmu:270627"/>
<dbReference type="UCSC" id="uc009txy.1">
    <molecule id="Q80UV9-2"/>
    <property type="organism name" value="mouse"/>
</dbReference>
<dbReference type="AGR" id="MGI:1336878"/>
<dbReference type="CTD" id="6872"/>
<dbReference type="MGI" id="MGI:1336878">
    <property type="gene designation" value="Taf1"/>
</dbReference>
<dbReference type="VEuPathDB" id="HostDB:ENSMUSG00000031314"/>
<dbReference type="eggNOG" id="KOG0008">
    <property type="taxonomic scope" value="Eukaryota"/>
</dbReference>
<dbReference type="GeneTree" id="ENSGT00940000155242"/>
<dbReference type="InParanoid" id="Q80UV9"/>
<dbReference type="Reactome" id="R-MMU-674695">
    <property type="pathway name" value="RNA Polymerase II Pre-transcription Events"/>
</dbReference>
<dbReference type="Reactome" id="R-MMU-6804756">
    <property type="pathway name" value="Regulation of TP53 Activity through Phosphorylation"/>
</dbReference>
<dbReference type="Reactome" id="R-MMU-73776">
    <property type="pathway name" value="RNA Polymerase II Promoter Escape"/>
</dbReference>
<dbReference type="Reactome" id="R-MMU-73779">
    <property type="pathway name" value="RNA Polymerase II Transcription Pre-Initiation And Promoter Opening"/>
</dbReference>
<dbReference type="Reactome" id="R-MMU-75953">
    <property type="pathway name" value="RNA Polymerase II Transcription Initiation"/>
</dbReference>
<dbReference type="Reactome" id="R-MMU-76042">
    <property type="pathway name" value="RNA Polymerase II Transcription Initiation And Promoter Clearance"/>
</dbReference>
<dbReference type="BioGRID-ORCS" id="270627">
    <property type="hits" value="12 hits in 41 CRISPR screens"/>
</dbReference>
<dbReference type="ChiTaRS" id="Taf1">
    <property type="organism name" value="mouse"/>
</dbReference>
<dbReference type="PRO" id="PR:Q80UV9"/>
<dbReference type="Proteomes" id="UP000000589">
    <property type="component" value="Chromosome X"/>
</dbReference>
<dbReference type="RNAct" id="Q80UV9">
    <property type="molecule type" value="protein"/>
</dbReference>
<dbReference type="Bgee" id="ENSMUSG00000031314">
    <property type="expression patterns" value="Expressed in manus and 231 other cell types or tissues"/>
</dbReference>
<dbReference type="ExpressionAtlas" id="Q80UV9">
    <property type="expression patterns" value="baseline and differential"/>
</dbReference>
<dbReference type="GO" id="GO:0071339">
    <property type="term" value="C:MLL1 complex"/>
    <property type="evidence" value="ECO:0000250"/>
    <property type="project" value="UniProtKB"/>
</dbReference>
<dbReference type="GO" id="GO:0005634">
    <property type="term" value="C:nucleus"/>
    <property type="evidence" value="ECO:0000266"/>
    <property type="project" value="ComplexPortal"/>
</dbReference>
<dbReference type="GO" id="GO:0045120">
    <property type="term" value="C:pronucleus"/>
    <property type="evidence" value="ECO:0000314"/>
    <property type="project" value="MGI"/>
</dbReference>
<dbReference type="GO" id="GO:0005669">
    <property type="term" value="C:transcription factor TFIID complex"/>
    <property type="evidence" value="ECO:0000250"/>
    <property type="project" value="UniProtKB"/>
</dbReference>
<dbReference type="GO" id="GO:0005524">
    <property type="term" value="F:ATP binding"/>
    <property type="evidence" value="ECO:0007669"/>
    <property type="project" value="UniProtKB-KW"/>
</dbReference>
<dbReference type="GO" id="GO:0003677">
    <property type="term" value="F:DNA binding"/>
    <property type="evidence" value="ECO:0000314"/>
    <property type="project" value="MGI"/>
</dbReference>
<dbReference type="GO" id="GO:0004402">
    <property type="term" value="F:histone acetyltransferase activity"/>
    <property type="evidence" value="ECO:0000314"/>
    <property type="project" value="UniProtKB"/>
</dbReference>
<dbReference type="GO" id="GO:1990841">
    <property type="term" value="F:promoter-specific chromatin binding"/>
    <property type="evidence" value="ECO:0000314"/>
    <property type="project" value="MGI"/>
</dbReference>
<dbReference type="GO" id="GO:0106310">
    <property type="term" value="F:protein serine kinase activity"/>
    <property type="evidence" value="ECO:0007669"/>
    <property type="project" value="RHEA"/>
</dbReference>
<dbReference type="GO" id="GO:0004674">
    <property type="term" value="F:protein serine/threonine kinase activity"/>
    <property type="evidence" value="ECO:0007669"/>
    <property type="project" value="UniProtKB-KW"/>
</dbReference>
<dbReference type="GO" id="GO:0016251">
    <property type="term" value="F:RNA polymerase II general transcription initiation factor activity"/>
    <property type="evidence" value="ECO:0007669"/>
    <property type="project" value="InterPro"/>
</dbReference>
<dbReference type="GO" id="GO:0017025">
    <property type="term" value="F:TBP-class protein binding"/>
    <property type="evidence" value="ECO:0007669"/>
    <property type="project" value="InterPro"/>
</dbReference>
<dbReference type="GO" id="GO:0042789">
    <property type="term" value="P:mRNA transcription by RNA polymerase II"/>
    <property type="evidence" value="ECO:0000266"/>
    <property type="project" value="ComplexPortal"/>
</dbReference>
<dbReference type="GO" id="GO:0060261">
    <property type="term" value="P:positive regulation of transcription initiation by RNA polymerase II"/>
    <property type="evidence" value="ECO:0000266"/>
    <property type="project" value="ComplexPortal"/>
</dbReference>
<dbReference type="GO" id="GO:0051123">
    <property type="term" value="P:RNA polymerase II preinitiation complex assembly"/>
    <property type="evidence" value="ECO:0000266"/>
    <property type="project" value="ComplexPortal"/>
</dbReference>
<dbReference type="CDD" id="cd05511">
    <property type="entry name" value="Bromo_TFIID"/>
    <property type="match status" value="2"/>
</dbReference>
<dbReference type="FunFam" id="1.10.1100.10:FF:000001">
    <property type="entry name" value="Transcription initiation factor TFIID subunit"/>
    <property type="match status" value="1"/>
</dbReference>
<dbReference type="FunFam" id="1.20.920.10:FF:000019">
    <property type="entry name" value="Transcription initiation factor TFIID subunit"/>
    <property type="match status" value="1"/>
</dbReference>
<dbReference type="FunFam" id="1.20.920.10:FF:000020">
    <property type="entry name" value="Transcription initiation factor TFIID subunit"/>
    <property type="match status" value="1"/>
</dbReference>
<dbReference type="Gene3D" id="1.20.920.10">
    <property type="entry name" value="Bromodomain-like"/>
    <property type="match status" value="2"/>
</dbReference>
<dbReference type="Gene3D" id="1.10.1100.10">
    <property type="entry name" value="TAFII-230 TBP-binding domain"/>
    <property type="match status" value="1"/>
</dbReference>
<dbReference type="InterPro" id="IPR001487">
    <property type="entry name" value="Bromodomain"/>
</dbReference>
<dbReference type="InterPro" id="IPR036427">
    <property type="entry name" value="Bromodomain-like_sf"/>
</dbReference>
<dbReference type="InterPro" id="IPR018359">
    <property type="entry name" value="Bromodomain_CS"/>
</dbReference>
<dbReference type="InterPro" id="IPR040240">
    <property type="entry name" value="TAF1"/>
</dbReference>
<dbReference type="InterPro" id="IPR011177">
    <property type="entry name" value="TAF1_animal"/>
</dbReference>
<dbReference type="InterPro" id="IPR022591">
    <property type="entry name" value="TAF1_HAT_dom"/>
</dbReference>
<dbReference type="InterPro" id="IPR009067">
    <property type="entry name" value="TAF_II_230-bd"/>
</dbReference>
<dbReference type="InterPro" id="IPR036741">
    <property type="entry name" value="TAFII-230_TBP-bd_sf"/>
</dbReference>
<dbReference type="InterPro" id="IPR041670">
    <property type="entry name" value="Znf-CCHC_6"/>
</dbReference>
<dbReference type="PANTHER" id="PTHR13900">
    <property type="entry name" value="TRANSCRIPTION INITIATION FACTOR TFIID"/>
    <property type="match status" value="1"/>
</dbReference>
<dbReference type="PANTHER" id="PTHR13900:SF0">
    <property type="entry name" value="TRANSCRIPTION INITIATION FACTOR TFIID SUBUNIT 1"/>
    <property type="match status" value="1"/>
</dbReference>
<dbReference type="Pfam" id="PF00439">
    <property type="entry name" value="Bromodomain"/>
    <property type="match status" value="2"/>
</dbReference>
<dbReference type="Pfam" id="PF12157">
    <property type="entry name" value="DUF3591"/>
    <property type="match status" value="1"/>
</dbReference>
<dbReference type="Pfam" id="PF09247">
    <property type="entry name" value="TBP-binding"/>
    <property type="match status" value="1"/>
</dbReference>
<dbReference type="Pfam" id="PF15288">
    <property type="entry name" value="zf-CCHC_6"/>
    <property type="match status" value="1"/>
</dbReference>
<dbReference type="PIRSF" id="PIRSF003047">
    <property type="entry name" value="TAF1_animal"/>
    <property type="match status" value="1"/>
</dbReference>
<dbReference type="PRINTS" id="PR00503">
    <property type="entry name" value="BROMODOMAIN"/>
</dbReference>
<dbReference type="SMART" id="SM00297">
    <property type="entry name" value="BROMO"/>
    <property type="match status" value="2"/>
</dbReference>
<dbReference type="SUPFAM" id="SSF47370">
    <property type="entry name" value="Bromodomain"/>
    <property type="match status" value="2"/>
</dbReference>
<dbReference type="SUPFAM" id="SSF47055">
    <property type="entry name" value="TAF(II)230 TBP-binding fragment"/>
    <property type="match status" value="1"/>
</dbReference>
<dbReference type="PROSITE" id="PS00633">
    <property type="entry name" value="BROMODOMAIN_1"/>
    <property type="match status" value="2"/>
</dbReference>
<dbReference type="PROSITE" id="PS50014">
    <property type="entry name" value="BROMODOMAIN_2"/>
    <property type="match status" value="2"/>
</dbReference>
<sequence>MGPGWAGLLQDKGGGSPSVVMSDTDSDEESAGGGPFSLTGFLFGNINGAGQLEGESVLDDECKKHLAGLGALGLGSLITELTANEELSGSDGALVNDEGWIRSREDAVDYSDINEVAEDESRRYQQTMGSLQPLCHTDYDEDDYDADCEDIDCKLMPPPPPPPGPLKKEKDQDDITGVSEDGEGIILPSIIAPSSLASEKVDFSSSSDSESEMGPQDAAQSESKDGQLTLPLAGIMQHDATKLLPSVTELFPEFRPGKVLRFLRLFGPGKNVPSVWRSARRKRKKKHRELIQEGQVQEEECSVELEVNQKSLWNYDYAPPPLPDQCLSDDEITMMAPVESKFSQSTGDTDKVMDTKPRVAEWRYGPARLWYDMLGVPEDGSGFDYGFKMKKTEHESTIKCNIMKKLRKLEENSGVDLLADENFLMVTQLHWEDDIIWDGEDVKHKGTKPQRASLAGWLPSSMTRNAMAYNVQQGFTATLDDDKPWYSIFPIDNEDLVYGRWEDNIIWDAQNMPRILEPPVLTLDPNDENLILEIPDEKEEATSNSPSKENKKESSLKKSRILLGKTGVIKEEPQQNMSQPEVKDPWNLSNDEYYYPKQQGLRGTFGGNIIQHSIPAVELRQPFFPTHMGPIKLRQFHRPPLKKYSFGALSQPGPHSVQPLLKHIKKKAKMREQERQASGGGEMFFMRTPQDLTGKDGDLILAEYSEENGPLMMQVGMATKIKNYYKRKPGKDPGAPDCKYGETVYCHTSPFLGSLHPGQLLQAFENNLFRAPIYLHKMPESDFLIIRTRQGYFIRELVDIFVVGQQCPLFEVPGPNSKRANTHIRDFLQVFIYRLFWKSKDRPRRIRMEDIKKAFPSHSESSIRKRLKLCADFKRTGMDSNWWVLKSDFRLPTEEEIRAMVSPEQCCAYYSMIAAEQRLKDAGYGEKSFFAPEEENEEDFQMKIDDEVRTAPWNTTRAFIAAMKGKCLLEVTGVADPTGCGEGFSYVKIPNKPTQQKDDKEPQPVKKTVTGTDADLRRLSLKNAKQLLRKFGVPEEEIKKLSRWEVIDVVRTMSTEQARSGEGPMSKFARGSRFSVAEHQERYKEECQRIFDLQNKVLSSTEVLSTDTDSSSAEDSDFEEMGKNIENMLQNKKTSSQLSREREEQERKELQRMLLAAGSAAAGNNHRDDDTASVTSLNSSATGRCLKIYRTFRDEEGKEYVRCETVRKATVIDAYVRIRTTKDEEFIRKFALFDEQHREEMRKERRRIQEQLRRLKRNQEKEKLKGPPEKKPKKMKERPDLKLKCGACGAIGHMRTNKFCPLYYQTNAPPSNPVAMTEEQEEELEKTVIHNDNEELIKVEGTKIVLGKQLIESADEVRRKSLVLKFPKQQLPPKKKRRVGTTVHCDYLNRPHKSIHRRRTDPMVTLSSILESIINDMRDLPNTYPFHTPVNAKVVKDYYKIITRPMDLQTLRENVRKRLYPSREEFREHLELIVKNSATYNGPKHSLTQISQSMLDLCDEKLKEKEDKLARLEKAINPLLDDDDQVAFSFILDNIVTQKMMAVPDSWPFHHPVNKKFVPDYYKVIVSPMDLETIRKNISKHKYQSRESFLDDVNLILANSVKYNGPESQYTKTAQEIVNVCHQTLTEYDEHLTQLEKDICTAKEAALEEAELESLDPMTPGPYTPQPPDLYDNNTSLSVSRDASVYQDESNLSVLDIPSATSEKQLTQEGGDGDGDLADEEEGTVQQPQASVLYEDLLMSEGEDDEEDAGSDEEGDNPFFAIQLSESGSDSDVESGSLRPKQPRVLQENTRMGMENEESMMSYEGDGGDASRGLEDSNISYGSYEEPDPKSNTQDTSFSSIGGYEVSEEEEDEEEQRSGPSVLSQVHLSEDEEDSEDFHSIAGDTDLDSDE</sequence>
<reference key="1">
    <citation type="journal article" date="2009" name="PLoS Biol.">
        <title>Lineage-specific biology revealed by a finished genome assembly of the mouse.</title>
        <authorList>
            <person name="Church D.M."/>
            <person name="Goodstadt L."/>
            <person name="Hillier L.W."/>
            <person name="Zody M.C."/>
            <person name="Goldstein S."/>
            <person name="She X."/>
            <person name="Bult C.J."/>
            <person name="Agarwala R."/>
            <person name="Cherry J.L."/>
            <person name="DiCuccio M."/>
            <person name="Hlavina W."/>
            <person name="Kapustin Y."/>
            <person name="Meric P."/>
            <person name="Maglott D."/>
            <person name="Birtle Z."/>
            <person name="Marques A.C."/>
            <person name="Graves T."/>
            <person name="Zhou S."/>
            <person name="Teague B."/>
            <person name="Potamousis K."/>
            <person name="Churas C."/>
            <person name="Place M."/>
            <person name="Herschleb J."/>
            <person name="Runnheim R."/>
            <person name="Forrest D."/>
            <person name="Amos-Landgraf J."/>
            <person name="Schwartz D.C."/>
            <person name="Cheng Z."/>
            <person name="Lindblad-Toh K."/>
            <person name="Eichler E.E."/>
            <person name="Ponting C.P."/>
        </authorList>
    </citation>
    <scope>NUCLEOTIDE SEQUENCE [LARGE SCALE GENOMIC DNA]</scope>
    <source>
        <strain>C57BL/6J</strain>
    </source>
</reference>
<reference key="2">
    <citation type="journal article" date="2004" name="Genome Res.">
        <title>The status, quality, and expansion of the NIH full-length cDNA project: the Mammalian Gene Collection (MGC).</title>
        <authorList>
            <consortium name="The MGC Project Team"/>
        </authorList>
    </citation>
    <scope>NUCLEOTIDE SEQUENCE [LARGE SCALE MRNA] (ISOFORM 2)</scope>
    <scope>NUCLEOTIDE SEQUENCE [LARGE SCALE MRNA] OF 601-1891</scope>
    <source>
        <strain>C57BL/6J</strain>
        <strain>Czech II</strain>
        <tissue>Brain</tissue>
        <tissue>Mammary tumor</tissue>
    </source>
</reference>
<reference key="3">
    <citation type="journal article" date="2005" name="Science">
        <title>The transcriptional landscape of the mammalian genome.</title>
        <authorList>
            <person name="Carninci P."/>
            <person name="Kasukawa T."/>
            <person name="Katayama S."/>
            <person name="Gough J."/>
            <person name="Frith M.C."/>
            <person name="Maeda N."/>
            <person name="Oyama R."/>
            <person name="Ravasi T."/>
            <person name="Lenhard B."/>
            <person name="Wells C."/>
            <person name="Kodzius R."/>
            <person name="Shimokawa K."/>
            <person name="Bajic V.B."/>
            <person name="Brenner S.E."/>
            <person name="Batalov S."/>
            <person name="Forrest A.R."/>
            <person name="Zavolan M."/>
            <person name="Davis M.J."/>
            <person name="Wilming L.G."/>
            <person name="Aidinis V."/>
            <person name="Allen J.E."/>
            <person name="Ambesi-Impiombato A."/>
            <person name="Apweiler R."/>
            <person name="Aturaliya R.N."/>
            <person name="Bailey T.L."/>
            <person name="Bansal M."/>
            <person name="Baxter L."/>
            <person name="Beisel K.W."/>
            <person name="Bersano T."/>
            <person name="Bono H."/>
            <person name="Chalk A.M."/>
            <person name="Chiu K.P."/>
            <person name="Choudhary V."/>
            <person name="Christoffels A."/>
            <person name="Clutterbuck D.R."/>
            <person name="Crowe M.L."/>
            <person name="Dalla E."/>
            <person name="Dalrymple B.P."/>
            <person name="de Bono B."/>
            <person name="Della Gatta G."/>
            <person name="di Bernardo D."/>
            <person name="Down T."/>
            <person name="Engstrom P."/>
            <person name="Fagiolini M."/>
            <person name="Faulkner G."/>
            <person name="Fletcher C.F."/>
            <person name="Fukushima T."/>
            <person name="Furuno M."/>
            <person name="Futaki S."/>
            <person name="Gariboldi M."/>
            <person name="Georgii-Hemming P."/>
            <person name="Gingeras T.R."/>
            <person name="Gojobori T."/>
            <person name="Green R.E."/>
            <person name="Gustincich S."/>
            <person name="Harbers M."/>
            <person name="Hayashi Y."/>
            <person name="Hensch T.K."/>
            <person name="Hirokawa N."/>
            <person name="Hill D."/>
            <person name="Huminiecki L."/>
            <person name="Iacono M."/>
            <person name="Ikeo K."/>
            <person name="Iwama A."/>
            <person name="Ishikawa T."/>
            <person name="Jakt M."/>
            <person name="Kanapin A."/>
            <person name="Katoh M."/>
            <person name="Kawasawa Y."/>
            <person name="Kelso J."/>
            <person name="Kitamura H."/>
            <person name="Kitano H."/>
            <person name="Kollias G."/>
            <person name="Krishnan S.P."/>
            <person name="Kruger A."/>
            <person name="Kummerfeld S.K."/>
            <person name="Kurochkin I.V."/>
            <person name="Lareau L.F."/>
            <person name="Lazarevic D."/>
            <person name="Lipovich L."/>
            <person name="Liu J."/>
            <person name="Liuni S."/>
            <person name="McWilliam S."/>
            <person name="Madan Babu M."/>
            <person name="Madera M."/>
            <person name="Marchionni L."/>
            <person name="Matsuda H."/>
            <person name="Matsuzawa S."/>
            <person name="Miki H."/>
            <person name="Mignone F."/>
            <person name="Miyake S."/>
            <person name="Morris K."/>
            <person name="Mottagui-Tabar S."/>
            <person name="Mulder N."/>
            <person name="Nakano N."/>
            <person name="Nakauchi H."/>
            <person name="Ng P."/>
            <person name="Nilsson R."/>
            <person name="Nishiguchi S."/>
            <person name="Nishikawa S."/>
            <person name="Nori F."/>
            <person name="Ohara O."/>
            <person name="Okazaki Y."/>
            <person name="Orlando V."/>
            <person name="Pang K.C."/>
            <person name="Pavan W.J."/>
            <person name="Pavesi G."/>
            <person name="Pesole G."/>
            <person name="Petrovsky N."/>
            <person name="Piazza S."/>
            <person name="Reed J."/>
            <person name="Reid J.F."/>
            <person name="Ring B.Z."/>
            <person name="Ringwald M."/>
            <person name="Rost B."/>
            <person name="Ruan Y."/>
            <person name="Salzberg S.L."/>
            <person name="Sandelin A."/>
            <person name="Schneider C."/>
            <person name="Schoenbach C."/>
            <person name="Sekiguchi K."/>
            <person name="Semple C.A."/>
            <person name="Seno S."/>
            <person name="Sessa L."/>
            <person name="Sheng Y."/>
            <person name="Shibata Y."/>
            <person name="Shimada H."/>
            <person name="Shimada K."/>
            <person name="Silva D."/>
            <person name="Sinclair B."/>
            <person name="Sperling S."/>
            <person name="Stupka E."/>
            <person name="Sugiura K."/>
            <person name="Sultana R."/>
            <person name="Takenaka Y."/>
            <person name="Taki K."/>
            <person name="Tammoja K."/>
            <person name="Tan S.L."/>
            <person name="Tang S."/>
            <person name="Taylor M.S."/>
            <person name="Tegner J."/>
            <person name="Teichmann S.A."/>
            <person name="Ueda H.R."/>
            <person name="van Nimwegen E."/>
            <person name="Verardo R."/>
            <person name="Wei C.L."/>
            <person name="Yagi K."/>
            <person name="Yamanishi H."/>
            <person name="Zabarovsky E."/>
            <person name="Zhu S."/>
            <person name="Zimmer A."/>
            <person name="Hide W."/>
            <person name="Bult C."/>
            <person name="Grimmond S.M."/>
            <person name="Teasdale R.D."/>
            <person name="Liu E.T."/>
            <person name="Brusic V."/>
            <person name="Quackenbush J."/>
            <person name="Wahlestedt C."/>
            <person name="Mattick J.S."/>
            <person name="Hume D.A."/>
            <person name="Kai C."/>
            <person name="Sasaki D."/>
            <person name="Tomaru Y."/>
            <person name="Fukuda S."/>
            <person name="Kanamori-Katayama M."/>
            <person name="Suzuki M."/>
            <person name="Aoki J."/>
            <person name="Arakawa T."/>
            <person name="Iida J."/>
            <person name="Imamura K."/>
            <person name="Itoh M."/>
            <person name="Kato T."/>
            <person name="Kawaji H."/>
            <person name="Kawagashira N."/>
            <person name="Kawashima T."/>
            <person name="Kojima M."/>
            <person name="Kondo S."/>
            <person name="Konno H."/>
            <person name="Nakano K."/>
            <person name="Ninomiya N."/>
            <person name="Nishio T."/>
            <person name="Okada M."/>
            <person name="Plessy C."/>
            <person name="Shibata K."/>
            <person name="Shiraki T."/>
            <person name="Suzuki S."/>
            <person name="Tagami M."/>
            <person name="Waki K."/>
            <person name="Watahiki A."/>
            <person name="Okamura-Oho Y."/>
            <person name="Suzuki H."/>
            <person name="Kawai J."/>
            <person name="Hayashizaki Y."/>
        </authorList>
    </citation>
    <scope>NUCLEOTIDE SEQUENCE [LARGE SCALE MRNA] OF 1-280 (ISOFORM 3)</scope>
    <scope>NUCLEOTIDE SEQUENCE [LARGE SCALE MRNA] OF 849-1237 (ISOFORM 1)</scope>
    <scope>NUCLEOTIDE SEQUENCE [LARGE SCALE MRNA] OF 1-401 AND 1143-1891</scope>
    <source>
        <strain>C57BL/6J</strain>
        <tissue>Adipose tissue</tissue>
        <tissue>Corpora quadrigemina</tissue>
        <tissue>Head</tissue>
        <tissue>Hippocampus</tissue>
        <tissue>Spleen</tissue>
    </source>
</reference>
<reference key="4">
    <citation type="journal article" date="1999" name="Am. J. Physiol.">
        <title>TAFII250, Egr-1, and D-type cyclin expression in mice and neonatal rat cardiomyocytes treated with doxorubicin.</title>
        <authorList>
            <person name="Saadane N."/>
            <person name="Alpert L."/>
            <person name="Chalifour L.E."/>
        </authorList>
    </citation>
    <scope>NUCLEOTIDE SEQUENCE [MRNA] OF 217-370; 841-876 AND 1199-1488</scope>
    <source>
        <strain>CD-1</strain>
        <tissue>Heart</tissue>
    </source>
</reference>
<reference key="5">
    <citation type="journal article" date="1998" name="Proc. Natl. Acad. Sci. U.S.A.">
        <title>HIV-1 tat binds TAFII250 and represses TAFII250-dependent transcription of major histocompatibility class I genes.</title>
        <authorList>
            <person name="Weissman J.D."/>
            <person name="Brown J.A."/>
            <person name="Howcroft T.K."/>
            <person name="Hwang J."/>
            <person name="Chawla A."/>
            <person name="Roche P.A."/>
            <person name="Schiltz L."/>
            <person name="Nakatani Y."/>
            <person name="Singer D.S."/>
        </authorList>
    </citation>
    <scope>NUCLEOTIDE SEQUENCE [MRNA] OF 867-1306</scope>
    <source>
        <tissue>Spleen</tissue>
    </source>
</reference>
<reference key="6">
    <citation type="journal article" date="1999" name="J. Biol. Chem.">
        <title>Isolation of mouse TFIID and functional characterization of TBP and TFIID in mediating estrogen receptor and chromatin transcription.</title>
        <authorList>
            <person name="Wu S.Y."/>
            <person name="Thomas M.C."/>
            <person name="Hou S.Y."/>
            <person name="Likhite V."/>
            <person name="Chiang C.M."/>
        </authorList>
    </citation>
    <scope>FUNCTION</scope>
    <scope>SUBUNIT</scope>
</reference>
<reference key="7">
    <citation type="journal article" date="2009" name="Immunity">
        <title>The phagosomal proteome in interferon-gamma-activated macrophages.</title>
        <authorList>
            <person name="Trost M."/>
            <person name="English L."/>
            <person name="Lemieux S."/>
            <person name="Courcelles M."/>
            <person name="Desjardins M."/>
            <person name="Thibault P."/>
        </authorList>
    </citation>
    <scope>IDENTIFICATION BY MASS SPECTROMETRY [LARGE SCALE ANALYSIS]</scope>
</reference>
<reference key="8">
    <citation type="journal article" date="2010" name="Cell">
        <title>A tissue-specific atlas of mouse protein phosphorylation and expression.</title>
        <authorList>
            <person name="Huttlin E.L."/>
            <person name="Jedrychowski M.P."/>
            <person name="Elias J.E."/>
            <person name="Goswami T."/>
            <person name="Rad R."/>
            <person name="Beausoleil S.A."/>
            <person name="Villen J."/>
            <person name="Haas W."/>
            <person name="Sowa M.E."/>
            <person name="Gygi S.P."/>
        </authorList>
    </citation>
    <scope>PHOSPHORYLATION [LARGE SCALE ANALYSIS] AT SER-1690; SER-1693; SER-1799; SER-1802 AND SER-1820</scope>
    <scope>IDENTIFICATION BY MASS SPECTROMETRY [LARGE SCALE ANALYSIS]</scope>
    <source>
        <tissue>Brain</tissue>
        <tissue>Brown adipose tissue</tissue>
        <tissue>Kidney</tissue>
        <tissue>Lung</tissue>
        <tissue>Pancreas</tissue>
        <tissue>Spleen</tissue>
        <tissue>Testis</tissue>
    </source>
</reference>
<reference key="9">
    <citation type="journal article" date="2013" name="Mol. Cell">
        <title>SIRT5-mediated lysine desuccinylation impacts diverse metabolic pathways.</title>
        <authorList>
            <person name="Park J."/>
            <person name="Chen Y."/>
            <person name="Tishkoff D.X."/>
            <person name="Peng C."/>
            <person name="Tan M."/>
            <person name="Dai L."/>
            <person name="Xie Z."/>
            <person name="Zhang Y."/>
            <person name="Zwaans B.M."/>
            <person name="Skinner M.E."/>
            <person name="Lombard D.B."/>
            <person name="Zhao Y."/>
        </authorList>
    </citation>
    <scope>ACETYLATION [LARGE SCALE ANALYSIS] AT LYS-565</scope>
    <scope>IDENTIFICATION BY MASS SPECTROMETRY [LARGE SCALE ANALYSIS]</scope>
    <source>
        <tissue>Embryonic fibroblast</tissue>
    </source>
</reference>
<organism>
    <name type="scientific">Mus musculus</name>
    <name type="common">Mouse</name>
    <dbReference type="NCBI Taxonomy" id="10090"/>
    <lineage>
        <taxon>Eukaryota</taxon>
        <taxon>Metazoa</taxon>
        <taxon>Chordata</taxon>
        <taxon>Craniata</taxon>
        <taxon>Vertebrata</taxon>
        <taxon>Euteleostomi</taxon>
        <taxon>Mammalia</taxon>
        <taxon>Eutheria</taxon>
        <taxon>Euarchontoglires</taxon>
        <taxon>Glires</taxon>
        <taxon>Rodentia</taxon>
        <taxon>Myomorpha</taxon>
        <taxon>Muroidea</taxon>
        <taxon>Muridae</taxon>
        <taxon>Murinae</taxon>
        <taxon>Mus</taxon>
        <taxon>Mus</taxon>
    </lineage>
</organism>
<evidence type="ECO:0000250" key="1"/>
<evidence type="ECO:0000250" key="2">
    <source>
        <dbReference type="UniProtKB" id="P21675"/>
    </source>
</evidence>
<evidence type="ECO:0000255" key="3"/>
<evidence type="ECO:0000255" key="4">
    <source>
        <dbReference type="PROSITE-ProRule" id="PRU00035"/>
    </source>
</evidence>
<evidence type="ECO:0000256" key="5">
    <source>
        <dbReference type="SAM" id="MobiDB-lite"/>
    </source>
</evidence>
<evidence type="ECO:0000269" key="6">
    <source>
    </source>
</evidence>
<evidence type="ECO:0000303" key="7">
    <source>
    </source>
</evidence>
<evidence type="ECO:0000303" key="8">
    <source>
    </source>
</evidence>
<evidence type="ECO:0000305" key="9"/>
<evidence type="ECO:0000312" key="10">
    <source>
        <dbReference type="MGI" id="MGI:1336878"/>
    </source>
</evidence>
<evidence type="ECO:0007744" key="11">
    <source>
    </source>
</evidence>
<evidence type="ECO:0007744" key="12">
    <source>
    </source>
</evidence>
<name>TAF1_MOUSE</name>
<comment type="function">
    <text evidence="2 6">The TFIID basal transcription factor complex plays a major role in the initiation of RNA polymerase II (Pol II)-dependent transcription (By similarity). TFIID recognizes and binds promoters with or without a TATA box via its subunit TBP, a TATA-box-binding protein, and promotes assembly of the pre-initiation complex (PIC) (By similarity). The TFIID complex consists of TBP and TBP-associated factors (TAFs), including TAF1, TAF2, TAF3, TAF4, TAF5, TAF6, TAF7, TAF8, TAF9, TAF10, TAF11, TAF12 and TAF13 (By similarity). TAF1 is the largest component and core scaffold of the TFIID complex, involved in nucleating complex assembly (PubMed:10438527). TAF1 forms a promoter DNA binding subcomplex of TFIID, together with TAF7 and TAF2 (By similarity). Contains novel N- and C-terminal Ser/Thr kinase domains which can autophosphorylate or transphosphorylate other transcription factors (By similarity). Phosphorylates TP53 on 'Thr-55' which leads to MDM2-mediated degradation of TP53 (By similarity). Phosphorylates GTF2A1 and GTF2F1 on Ser residues (By similarity). Possesses DNA-binding activity (By similarity). Exhibits histone acetyltransferase activity towards histones H3 and H4 (By similarity). Essential for progression of the G1 phase of the cell cycle (By similarity).</text>
</comment>
<comment type="catalytic activity">
    <reaction>
        <text>L-seryl-[protein] + ATP = O-phospho-L-seryl-[protein] + ADP + H(+)</text>
        <dbReference type="Rhea" id="RHEA:17989"/>
        <dbReference type="Rhea" id="RHEA-COMP:9863"/>
        <dbReference type="Rhea" id="RHEA-COMP:11604"/>
        <dbReference type="ChEBI" id="CHEBI:15378"/>
        <dbReference type="ChEBI" id="CHEBI:29999"/>
        <dbReference type="ChEBI" id="CHEBI:30616"/>
        <dbReference type="ChEBI" id="CHEBI:83421"/>
        <dbReference type="ChEBI" id="CHEBI:456216"/>
        <dbReference type="EC" id="2.7.11.1"/>
    </reaction>
</comment>
<comment type="catalytic activity">
    <reaction>
        <text>L-threonyl-[protein] + ATP = O-phospho-L-threonyl-[protein] + ADP + H(+)</text>
        <dbReference type="Rhea" id="RHEA:46608"/>
        <dbReference type="Rhea" id="RHEA-COMP:11060"/>
        <dbReference type="Rhea" id="RHEA-COMP:11605"/>
        <dbReference type="ChEBI" id="CHEBI:15378"/>
        <dbReference type="ChEBI" id="CHEBI:30013"/>
        <dbReference type="ChEBI" id="CHEBI:30616"/>
        <dbReference type="ChEBI" id="CHEBI:61977"/>
        <dbReference type="ChEBI" id="CHEBI:456216"/>
        <dbReference type="EC" id="2.7.11.1"/>
    </reaction>
</comment>
<comment type="catalytic activity">
    <reaction evidence="2">
        <text>L-lysyl-[protein] + acetyl-CoA = N(6)-acetyl-L-lysyl-[protein] + CoA + H(+)</text>
        <dbReference type="Rhea" id="RHEA:45948"/>
        <dbReference type="Rhea" id="RHEA-COMP:9752"/>
        <dbReference type="Rhea" id="RHEA-COMP:10731"/>
        <dbReference type="ChEBI" id="CHEBI:15378"/>
        <dbReference type="ChEBI" id="CHEBI:29969"/>
        <dbReference type="ChEBI" id="CHEBI:57287"/>
        <dbReference type="ChEBI" id="CHEBI:57288"/>
        <dbReference type="ChEBI" id="CHEBI:61930"/>
        <dbReference type="EC" id="2.3.1.48"/>
    </reaction>
</comment>
<comment type="cofactor">
    <cofactor evidence="1">
        <name>Mg(2+)</name>
        <dbReference type="ChEBI" id="CHEBI:18420"/>
    </cofactor>
</comment>
<comment type="activity regulation">
    <text evidence="2">Autophosphorylates on Ser residues. Inhibited by retinoblastoma tumor suppressor protein, RB1. Binding to TAF1 or CIITA inhibits the histone acetyltransferase activity.</text>
</comment>
<comment type="subunit">
    <text evidence="2 6">Component of the TFIID basal transcription factor complex, composed of TATA-box-binding protein TBP, and a number of TBP-associated factors (TAFs) (PubMed:10438527). TFIID consists of at least TBP, TAF1, TAF2, TAF3, TAF4, TAF5, TAF6, TAF7, TAF8, TAF9, TAF10, TAF11, TAF12 and TAF13. Interacts with TAF7; the interaction is direct. TAF1, when part of the TFIID complex, interacts with C-terminus of TP53. Part of a TFIID-containing RNA polymerase II pre-initiation complex that is composed of TBP and at least GTF2A1, GTF2A2, GTF2E1, GTF2E2, GTF2F1, GTF2H2, GTF2H3, GTF2H4, GTF2H5, GTF2B, TCEA1, ERCC2, ERCC3, TAF1, TAF2, TAF3, TAF4, TAF5, TAF6, TAF7, TAF8, TAF9, TAF10, TAF11, TAF12 and TAF13. Component of some MLL1/MLL complex, at least composed of the core components KMT2A/MLL1, ASH2L, HCFC1/HCF1, WDR5 and RBBP5, as well as the facultative components BACC1, CHD8, E2F6, HSP70, INO80C, KANSL1, LAS1L, MAX, MCRS1, MGA, KAT8/MOF, PELP1, PHF20, PRP31, RING2, RUVB1/TIP49A, RUVB2/TIP49B, SENP3, TAF1, TAF4, TAF6, TAF7, TAF9 and TEX10. RB1 interacts with the N-terminal domain of TAF1. Interacts with ASF1A and ASF1B. Interacts (via bromo domains) with acetylated lysine residues on the N-terminus of histone H1.4, H2A, H2B, H3 and H4 (in vitro) (By similarity).</text>
</comment>
<comment type="interaction">
    <interactant intactId="EBI-15563115">
        <id>Q80UV9-1</id>
    </interactant>
    <interactant intactId="EBI-1560194">
        <id>Q15545</id>
        <label>TAF7</label>
    </interactant>
    <organismsDiffer>true</organismsDiffer>
    <experiments>2</experiments>
</comment>
<comment type="subcellular location">
    <subcellularLocation>
        <location evidence="2">Nucleus</location>
    </subcellularLocation>
</comment>
<comment type="alternative products">
    <event type="alternative splicing"/>
    <event type="alternative initiation"/>
    <isoform>
        <id>Q80UV9-1</id>
        <name>1</name>
        <sequence type="displayed"/>
    </isoform>
    <isoform>
        <id>Q80UV9-2</id>
        <name>2</name>
        <sequence type="described" ref="VSP_023320"/>
    </isoform>
    <isoform>
        <id>Q80UV9-3</id>
        <name>3</name>
        <sequence type="described" ref="VSP_023321"/>
    </isoform>
    <isoform>
        <id>Q80UV9-4</id>
        <name>4</name>
        <sequence type="described" ref="VSP_062001"/>
    </isoform>
</comment>
<comment type="domain">
    <text evidence="2">The Bromo domain mediates interaction with histones that have acetylated lysine residues at specific positions. The second domain also recognizes and binds histones that are butyrylated and crotonylated.</text>
</comment>
<comment type="PTM">
    <text evidence="2">Phosphorylated by casein kinase II in vitro.</text>
</comment>
<comment type="similarity">
    <text evidence="9">Belongs to the TAF1 family.</text>
</comment>
<comment type="sequence caution" evidence="9">
    <conflict type="erroneous initiation">
        <sequence resource="EMBL-CDS" id="BAC34383"/>
    </conflict>
</comment>